<name>HEMH_PELUB</name>
<keyword id="KW-0963">Cytoplasm</keyword>
<keyword id="KW-0350">Heme biosynthesis</keyword>
<keyword id="KW-0408">Iron</keyword>
<keyword id="KW-0456">Lyase</keyword>
<keyword id="KW-0479">Metal-binding</keyword>
<keyword id="KW-0627">Porphyrin biosynthesis</keyword>
<keyword id="KW-1185">Reference proteome</keyword>
<proteinExistence type="inferred from homology"/>
<feature type="chain" id="PRO_1000019334" description="Ferrochelatase">
    <location>
        <begin position="1"/>
        <end position="344"/>
    </location>
</feature>
<feature type="binding site" evidence="1">
    <location>
        <position position="191"/>
    </location>
    <ligand>
        <name>Fe cation</name>
        <dbReference type="ChEBI" id="CHEBI:24875"/>
    </ligand>
</feature>
<feature type="binding site" evidence="1">
    <location>
        <position position="271"/>
    </location>
    <ligand>
        <name>Fe cation</name>
        <dbReference type="ChEBI" id="CHEBI:24875"/>
    </ligand>
</feature>
<gene>
    <name evidence="1" type="primary">hemH</name>
    <name type="ordered locus">SAR11_0346</name>
</gene>
<dbReference type="EC" id="4.98.1.1" evidence="1"/>
<dbReference type="EMBL" id="CP000084">
    <property type="protein sequence ID" value="AAZ21168.1"/>
    <property type="molecule type" value="Genomic_DNA"/>
</dbReference>
<dbReference type="RefSeq" id="WP_011281639.1">
    <property type="nucleotide sequence ID" value="NC_007205.1"/>
</dbReference>
<dbReference type="SMR" id="Q4FNS1"/>
<dbReference type="STRING" id="335992.SAR11_0346"/>
<dbReference type="GeneID" id="66294844"/>
<dbReference type="KEGG" id="pub:SAR11_0346"/>
<dbReference type="eggNOG" id="COG0276">
    <property type="taxonomic scope" value="Bacteria"/>
</dbReference>
<dbReference type="HOGENOM" id="CLU_018884_4_1_5"/>
<dbReference type="OrthoDB" id="9809741at2"/>
<dbReference type="UniPathway" id="UPA00252">
    <property type="reaction ID" value="UER00325"/>
</dbReference>
<dbReference type="Proteomes" id="UP000002528">
    <property type="component" value="Chromosome"/>
</dbReference>
<dbReference type="GO" id="GO:0005737">
    <property type="term" value="C:cytoplasm"/>
    <property type="evidence" value="ECO:0007669"/>
    <property type="project" value="UniProtKB-SubCell"/>
</dbReference>
<dbReference type="GO" id="GO:0004325">
    <property type="term" value="F:ferrochelatase activity"/>
    <property type="evidence" value="ECO:0007669"/>
    <property type="project" value="UniProtKB-UniRule"/>
</dbReference>
<dbReference type="GO" id="GO:0046872">
    <property type="term" value="F:metal ion binding"/>
    <property type="evidence" value="ECO:0007669"/>
    <property type="project" value="UniProtKB-KW"/>
</dbReference>
<dbReference type="GO" id="GO:0006783">
    <property type="term" value="P:heme biosynthetic process"/>
    <property type="evidence" value="ECO:0007669"/>
    <property type="project" value="UniProtKB-UniRule"/>
</dbReference>
<dbReference type="CDD" id="cd00419">
    <property type="entry name" value="Ferrochelatase_C"/>
    <property type="match status" value="1"/>
</dbReference>
<dbReference type="CDD" id="cd03411">
    <property type="entry name" value="Ferrochelatase_N"/>
    <property type="match status" value="1"/>
</dbReference>
<dbReference type="Gene3D" id="3.40.50.1400">
    <property type="match status" value="2"/>
</dbReference>
<dbReference type="HAMAP" id="MF_00323">
    <property type="entry name" value="Ferrochelatase"/>
    <property type="match status" value="1"/>
</dbReference>
<dbReference type="InterPro" id="IPR001015">
    <property type="entry name" value="Ferrochelatase"/>
</dbReference>
<dbReference type="InterPro" id="IPR019772">
    <property type="entry name" value="Ferrochelatase_AS"/>
</dbReference>
<dbReference type="InterPro" id="IPR033644">
    <property type="entry name" value="Ferrochelatase_C"/>
</dbReference>
<dbReference type="InterPro" id="IPR033659">
    <property type="entry name" value="Ferrochelatase_N"/>
</dbReference>
<dbReference type="NCBIfam" id="TIGR00109">
    <property type="entry name" value="hemH"/>
    <property type="match status" value="1"/>
</dbReference>
<dbReference type="PANTHER" id="PTHR11108">
    <property type="entry name" value="FERROCHELATASE"/>
    <property type="match status" value="1"/>
</dbReference>
<dbReference type="PANTHER" id="PTHR11108:SF1">
    <property type="entry name" value="FERROCHELATASE, MITOCHONDRIAL"/>
    <property type="match status" value="1"/>
</dbReference>
<dbReference type="Pfam" id="PF00762">
    <property type="entry name" value="Ferrochelatase"/>
    <property type="match status" value="1"/>
</dbReference>
<dbReference type="SUPFAM" id="SSF53800">
    <property type="entry name" value="Chelatase"/>
    <property type="match status" value="1"/>
</dbReference>
<dbReference type="PROSITE" id="PS00534">
    <property type="entry name" value="FERROCHELATASE"/>
    <property type="match status" value="1"/>
</dbReference>
<sequence>MKKAVILFNLGGPDKIENVEPFLFNLFNDPAILNLPTILRYPLAKLISNRRAPVAKKIYKELGGSSPILKLTMAQSKALETKLNQTEIDSEYKCFIVMRCWNPRANDVIKDVQSFNPEEIILMPLYPQYSAATSGSSIKEWRDVCKKNNYHVKTNTICCYPTDQNFINAHTKEIIKKIKDLKNFKLIFSAHGLPEKNIKKGDPYQWQVEQSVKKIVENLNIENLDWILSYQSRVGPLKWIGPSTEDIIVENSKLAKHIVLVPIAFVSEHSETLVELDIEYKEIADANGCKNYTRVPALGTNEDFIKAMSELIIKKNEYKFSENLYPPKIQCPSNFKKCPCLNYE</sequence>
<evidence type="ECO:0000255" key="1">
    <source>
        <dbReference type="HAMAP-Rule" id="MF_00323"/>
    </source>
</evidence>
<protein>
    <recommendedName>
        <fullName evidence="1">Ferrochelatase</fullName>
        <ecNumber evidence="1">4.98.1.1</ecNumber>
    </recommendedName>
    <alternativeName>
        <fullName evidence="1">Heme synthase</fullName>
    </alternativeName>
    <alternativeName>
        <fullName evidence="1">Protoheme ferro-lyase</fullName>
    </alternativeName>
</protein>
<organism>
    <name type="scientific">Pelagibacter ubique (strain HTCC1062)</name>
    <dbReference type="NCBI Taxonomy" id="335992"/>
    <lineage>
        <taxon>Bacteria</taxon>
        <taxon>Pseudomonadati</taxon>
        <taxon>Pseudomonadota</taxon>
        <taxon>Alphaproteobacteria</taxon>
        <taxon>Candidatus Pelagibacterales</taxon>
        <taxon>Candidatus Pelagibacteraceae</taxon>
        <taxon>Candidatus Pelagibacter</taxon>
    </lineage>
</organism>
<accession>Q4FNS1</accession>
<comment type="function">
    <text evidence="1">Catalyzes the ferrous insertion into protoporphyrin IX.</text>
</comment>
<comment type="catalytic activity">
    <reaction evidence="1">
        <text>heme b + 2 H(+) = protoporphyrin IX + Fe(2+)</text>
        <dbReference type="Rhea" id="RHEA:22584"/>
        <dbReference type="ChEBI" id="CHEBI:15378"/>
        <dbReference type="ChEBI" id="CHEBI:29033"/>
        <dbReference type="ChEBI" id="CHEBI:57306"/>
        <dbReference type="ChEBI" id="CHEBI:60344"/>
        <dbReference type="EC" id="4.98.1.1"/>
    </reaction>
</comment>
<comment type="pathway">
    <text evidence="1">Porphyrin-containing compound metabolism; protoheme biosynthesis; protoheme from protoporphyrin-IX: step 1/1.</text>
</comment>
<comment type="subcellular location">
    <subcellularLocation>
        <location evidence="1">Cytoplasm</location>
    </subcellularLocation>
</comment>
<comment type="similarity">
    <text evidence="1">Belongs to the ferrochelatase family.</text>
</comment>
<reference key="1">
    <citation type="journal article" date="2005" name="Science">
        <title>Genome streamlining in a cosmopolitan oceanic bacterium.</title>
        <authorList>
            <person name="Giovannoni S.J."/>
            <person name="Tripp H.J."/>
            <person name="Givan S."/>
            <person name="Podar M."/>
            <person name="Vergin K.L."/>
            <person name="Baptista D."/>
            <person name="Bibbs L."/>
            <person name="Eads J."/>
            <person name="Richardson T.H."/>
            <person name="Noordewier M."/>
            <person name="Rappe M.S."/>
            <person name="Short J.M."/>
            <person name="Carrington J.C."/>
            <person name="Mathur E.J."/>
        </authorList>
    </citation>
    <scope>NUCLEOTIDE SEQUENCE [LARGE SCALE GENOMIC DNA]</scope>
    <source>
        <strain>HTCC1062</strain>
    </source>
</reference>